<keyword id="KW-1185">Reference proteome</keyword>
<protein>
    <recommendedName>
        <fullName>Uncharacterized protein MPN_511</fullName>
    </recommendedName>
</protein>
<accession>P75275</accession>
<dbReference type="EMBL" id="U00089">
    <property type="protein sequence ID" value="AAB95979.1"/>
    <property type="molecule type" value="Genomic_DNA"/>
</dbReference>
<dbReference type="PIR" id="S73657">
    <property type="entry name" value="S73657"/>
</dbReference>
<dbReference type="RefSeq" id="NP_110199.1">
    <property type="nucleotide sequence ID" value="NC_000912.1"/>
</dbReference>
<dbReference type="RefSeq" id="WP_010874867.1">
    <property type="nucleotide sequence ID" value="NZ_OU342337.1"/>
</dbReference>
<dbReference type="SMR" id="P75275"/>
<dbReference type="EnsemblBacteria" id="AAB95979">
    <property type="protein sequence ID" value="AAB95979"/>
    <property type="gene ID" value="MPN_511"/>
</dbReference>
<dbReference type="KEGG" id="mpn:MPN_511"/>
<dbReference type="PATRIC" id="fig|272634.6.peg.563"/>
<dbReference type="HOGENOM" id="CLU_1068840_0_0_14"/>
<dbReference type="BioCyc" id="MPNE272634:G1GJ3-839-MONOMER"/>
<dbReference type="Proteomes" id="UP000000808">
    <property type="component" value="Chromosome"/>
</dbReference>
<dbReference type="InterPro" id="IPR004306">
    <property type="entry name" value="DUF237"/>
</dbReference>
<dbReference type="Pfam" id="PF03072">
    <property type="entry name" value="DUF237"/>
    <property type="match status" value="1"/>
</dbReference>
<comment type="similarity">
    <text evidence="1">Belongs to the MG032/MG096/MG288 family.</text>
</comment>
<organism>
    <name type="scientific">Mycoplasma pneumoniae (strain ATCC 29342 / M129 / Subtype 1)</name>
    <name type="common">Mycoplasmoides pneumoniae</name>
    <dbReference type="NCBI Taxonomy" id="272634"/>
    <lineage>
        <taxon>Bacteria</taxon>
        <taxon>Bacillati</taxon>
        <taxon>Mycoplasmatota</taxon>
        <taxon>Mycoplasmoidales</taxon>
        <taxon>Mycoplasmoidaceae</taxon>
        <taxon>Mycoplasmoides</taxon>
    </lineage>
</organism>
<feature type="chain" id="PRO_0000215258" description="Uncharacterized protein MPN_511">
    <location>
        <begin position="1"/>
        <end position="260"/>
    </location>
</feature>
<sequence>MQAFKEYWQKQKKDVTDKKQLLEALKLSFAKEQNKTFAFLIKNFQDGISNYYPNDQEDQSEAAKTAFGTQGIAFPQSGLKGIFMSEWLRKQLGEKAKINLDIKSLKVTDSKISPTIKWNKDIGIKRNQDKPYNFRFEIDIEYQGNYKLSWLEAIIAKFSGIPGEWKGKLNLKFIVDGDLSWEIVQKPDYPGSLFQFDDQKQQLLFKLHVWEKITVQEPEFMELIKSQNLHNLELRTESTKPPVVDLASYLHYQLLKLNQQ</sequence>
<evidence type="ECO:0000305" key="1"/>
<proteinExistence type="inferred from homology"/>
<reference key="1">
    <citation type="journal article" date="1996" name="Nucleic Acids Res.">
        <title>Complete sequence analysis of the genome of the bacterium Mycoplasma pneumoniae.</title>
        <authorList>
            <person name="Himmelreich R."/>
            <person name="Hilbert H."/>
            <person name="Plagens H."/>
            <person name="Pirkl E."/>
            <person name="Li B.-C."/>
            <person name="Herrmann R."/>
        </authorList>
    </citation>
    <scope>NUCLEOTIDE SEQUENCE [LARGE SCALE GENOMIC DNA]</scope>
    <source>
        <strain>ATCC 29342 / M129 / Subtype 1</strain>
    </source>
</reference>
<gene>
    <name type="ordered locus">MPN_511</name>
    <name type="ORF">F04_orf260V</name>
    <name type="ORF">MP331</name>
</gene>
<name>Y511_MYCPN</name>